<organism>
    <name type="scientific">Poinsettia latent virus (isolate Euphorbia pulcherrima/Germany/Siepen/2005)</name>
    <name type="common">PnLV</name>
    <name type="synonym">Poinsettia cryptic virus</name>
    <dbReference type="NCBI Taxonomy" id="686943"/>
    <lineage>
        <taxon>Viruses</taxon>
        <taxon>Riboviria</taxon>
        <taxon>Orthornavirae</taxon>
        <taxon>Pisuviricota</taxon>
        <taxon>Pisoniviricetes</taxon>
        <taxon>Sobelivirales</taxon>
        <taxon>Solemoviridae</taxon>
        <taxon>Polemovirus</taxon>
        <taxon>Poinsettia latent virus</taxon>
    </lineage>
</organism>
<evidence type="ECO:0000255" key="1"/>
<evidence type="ECO:0000255" key="2">
    <source>
        <dbReference type="PROSITE-ProRule" id="PRU00539"/>
    </source>
</evidence>
<evidence type="ECO:0000255" key="3">
    <source>
        <dbReference type="PROSITE-ProRule" id="PRU01216"/>
    </source>
</evidence>
<evidence type="ECO:0000256" key="4">
    <source>
        <dbReference type="SAM" id="MobiDB-lite"/>
    </source>
</evidence>
<evidence type="ECO:0000305" key="5"/>
<dbReference type="EC" id="3.4.21.-"/>
<dbReference type="EC" id="2.7.7.48"/>
<dbReference type="EMBL" id="AJ867490">
    <property type="protein sequence ID" value="CAI34771.1"/>
    <property type="status" value="ALT_SEQ"/>
    <property type="molecule type" value="Genomic_RNA"/>
</dbReference>
<dbReference type="RefSeq" id="YP_002308462.1">
    <property type="nucleotide sequence ID" value="NC_011543.1"/>
</dbReference>
<dbReference type="KEGG" id="vg:7040108"/>
<dbReference type="Proteomes" id="UP000001670">
    <property type="component" value="Segment"/>
</dbReference>
<dbReference type="GO" id="GO:0033644">
    <property type="term" value="C:host cell membrane"/>
    <property type="evidence" value="ECO:0007669"/>
    <property type="project" value="UniProtKB-SubCell"/>
</dbReference>
<dbReference type="GO" id="GO:0016020">
    <property type="term" value="C:membrane"/>
    <property type="evidence" value="ECO:0007669"/>
    <property type="project" value="UniProtKB-KW"/>
</dbReference>
<dbReference type="GO" id="GO:0000166">
    <property type="term" value="F:nucleotide binding"/>
    <property type="evidence" value="ECO:0007669"/>
    <property type="project" value="UniProtKB-KW"/>
</dbReference>
<dbReference type="GO" id="GO:0003723">
    <property type="term" value="F:RNA binding"/>
    <property type="evidence" value="ECO:0007669"/>
    <property type="project" value="InterPro"/>
</dbReference>
<dbReference type="GO" id="GO:0003968">
    <property type="term" value="F:RNA-directed RNA polymerase activity"/>
    <property type="evidence" value="ECO:0007669"/>
    <property type="project" value="UniProtKB-KW"/>
</dbReference>
<dbReference type="GO" id="GO:0004252">
    <property type="term" value="F:serine-type endopeptidase activity"/>
    <property type="evidence" value="ECO:0007669"/>
    <property type="project" value="InterPro"/>
</dbReference>
<dbReference type="GO" id="GO:0006351">
    <property type="term" value="P:DNA-templated transcription"/>
    <property type="evidence" value="ECO:0007669"/>
    <property type="project" value="InterPro"/>
</dbReference>
<dbReference type="GO" id="GO:0006508">
    <property type="term" value="P:proteolysis"/>
    <property type="evidence" value="ECO:0007669"/>
    <property type="project" value="UniProtKB-KW"/>
</dbReference>
<dbReference type="GO" id="GO:0039694">
    <property type="term" value="P:viral RNA genome replication"/>
    <property type="evidence" value="ECO:0007669"/>
    <property type="project" value="InterPro"/>
</dbReference>
<dbReference type="GO" id="GO:0075523">
    <property type="term" value="P:viral translational frameshifting"/>
    <property type="evidence" value="ECO:0007669"/>
    <property type="project" value="UniProtKB-KW"/>
</dbReference>
<dbReference type="CDD" id="cd23180">
    <property type="entry name" value="ps-ssRNAv_Solemoviridae_RdRp"/>
    <property type="match status" value="1"/>
</dbReference>
<dbReference type="Gene3D" id="2.40.10.10">
    <property type="entry name" value="Trypsin-like serine proteases"/>
    <property type="match status" value="2"/>
</dbReference>
<dbReference type="InterPro" id="IPR043502">
    <property type="entry name" value="DNA/RNA_pol_sf"/>
</dbReference>
<dbReference type="InterPro" id="IPR009003">
    <property type="entry name" value="Peptidase_S1_PA"/>
</dbReference>
<dbReference type="InterPro" id="IPR043504">
    <property type="entry name" value="Peptidase_S1_PA_chymotrypsin"/>
</dbReference>
<dbReference type="InterPro" id="IPR000382">
    <property type="entry name" value="Peptidase_S39B_luteovirus"/>
</dbReference>
<dbReference type="InterPro" id="IPR001795">
    <property type="entry name" value="RNA-dir_pol_luteovirus"/>
</dbReference>
<dbReference type="InterPro" id="IPR007094">
    <property type="entry name" value="RNA-dir_pol_PSvirus"/>
</dbReference>
<dbReference type="Pfam" id="PF02122">
    <property type="entry name" value="Peptidase_S39"/>
    <property type="match status" value="1"/>
</dbReference>
<dbReference type="Pfam" id="PF02123">
    <property type="entry name" value="RdRP_4"/>
    <property type="match status" value="1"/>
</dbReference>
<dbReference type="PRINTS" id="PR00914">
    <property type="entry name" value="LVIRUSRNAPOL"/>
</dbReference>
<dbReference type="SUPFAM" id="SSF56672">
    <property type="entry name" value="DNA/RNA polymerases"/>
    <property type="match status" value="1"/>
</dbReference>
<dbReference type="SUPFAM" id="SSF50494">
    <property type="entry name" value="Trypsin-like serine proteases"/>
    <property type="match status" value="1"/>
</dbReference>
<dbReference type="PROSITE" id="PS51868">
    <property type="entry name" value="PEPTIDASE_S39"/>
    <property type="match status" value="1"/>
</dbReference>
<dbReference type="PROSITE" id="PS50507">
    <property type="entry name" value="RDRP_SSRNA_POS"/>
    <property type="match status" value="1"/>
</dbReference>
<sequence length="1100" mass="122814">MALLGIKLMTLVFAAWLSCCHSSSALPSSGLSGPCLNHSCLLRNSLNGASQWGTILHSPAVGSNCPPCPMMSIMGCSPPKPLQSNSYGVLCSTIASKAKQDLKLCWKEVQTRSEMYSKRISAALIDSLHQAVGMLLMIIIWIWSSIFLVVYHVLAYMTTYHLSSAVCVGFLIFCTICAFRLISWICGDLLAFNVSGLTPIWVNFSESSCPAGLSLRRYKNEKTVEGYKPFIIPQKSPKKSVIELSFSNGSHLGYATCVRLWDGSICLMTAKHCLVKEALLKGRVAGHSLPVKNFDLFLTCDEIDFSLLRGPKQWEAYLGVKGADLITSNRIGRSPVTFYNLSKDGEWLANSAQITGRHGKLCSVLSNTSPGDSGTPYYSGKNVVGIHKGTSELENYNLMIPIPNIPGLTSPDFKFETTNVRGNLYNDEGFRLSVGEDDKAEHWTDRLMKSITFKTKRWADWAEEESESDDERGKVVPPAKPSNYGEGCPPEHNQYLSDVGDLLTKVIGPEQNEKCVDILMGIMGVDKNEVAPHKEEKAEKGKRSSGFGHGKNRKGTNHPMRRGYNFRNCKKGGGQDESESHREISGRDPGRESNDKSPQGEAEEFERYFSSFYSWKLHNSGEANSGFRPCGKIPKFYRPRKRRVSEWGQNLARKHSSLGEITQGFGWPEAGAEAELRSLRLQAQRWLERSKSSVIPSAIEREIVISRLVESYKICRSEAPLCSSGSDLSWKGFLEDFREAVSSLELDAGIGVPYIGYGYPTHRGWVENPRLLPVLSRLVYARLQRLATLSVDGKTPEELVRDGLVDPVRVFVKGEPHKQSKLDEGRYRLIMSVSLIDQLVARVLFQKQNKLELLLWRSIPSKPGFGLSTVEQVEEFIDHLARVVDVKSDDLLENWRELMVPTDCSGFDWSVSDWMLKDEMEVRNRLTINCNDLTRRLRNSWLYCLSNSDLALSDGSLLAQEVPGVQKSGSYNTSSTNSRIRVMAAYFAGASWAVAIGDDALESIDTTLAVYKSLGFKVEVSEDLEFCSHIFKTRSLAIPVNTSKMLYRLIYGYEPECGNLDVLRNYLCALASVLHELRHDQDLVQNLSKWLIPDGSQKIS</sequence>
<feature type="signal peptide" evidence="1">
    <location>
        <begin position="1"/>
        <end position="25"/>
    </location>
</feature>
<feature type="chain" id="PRO_0000402480" description="Protein P2-P3">
    <location>
        <begin position="26"/>
        <end position="1100"/>
    </location>
</feature>
<feature type="chain" id="PRO_0000402481" description="Serine protease" evidence="1">
    <location>
        <begin position="222"/>
        <end position="416"/>
    </location>
</feature>
<feature type="chain" id="PRO_0000402482" description="RNA-directed RNA polymerase" evidence="1">
    <location>
        <begin position="417"/>
        <end position="1100"/>
    </location>
</feature>
<feature type="transmembrane region" description="Helical" evidence="1">
    <location>
        <begin position="131"/>
        <end position="151"/>
    </location>
</feature>
<feature type="transmembrane region" description="Helical" evidence="1">
    <location>
        <begin position="165"/>
        <end position="185"/>
    </location>
</feature>
<feature type="domain" description="Peptidase S39" evidence="3">
    <location>
        <begin position="224"/>
        <end position="416"/>
    </location>
</feature>
<feature type="domain" description="RdRp catalytic" evidence="2">
    <location>
        <begin position="897"/>
        <end position="1012"/>
    </location>
</feature>
<feature type="region of interest" description="Disordered" evidence="4">
    <location>
        <begin position="463"/>
        <end position="493"/>
    </location>
</feature>
<feature type="region of interest" description="Disordered" evidence="4">
    <location>
        <begin position="530"/>
        <end position="601"/>
    </location>
</feature>
<feature type="compositionally biased region" description="Basic and acidic residues" evidence="4">
    <location>
        <begin position="530"/>
        <end position="542"/>
    </location>
</feature>
<feature type="compositionally biased region" description="Basic residues" evidence="4">
    <location>
        <begin position="550"/>
        <end position="561"/>
    </location>
</feature>
<feature type="compositionally biased region" description="Basic and acidic residues" evidence="4">
    <location>
        <begin position="578"/>
        <end position="595"/>
    </location>
</feature>
<feature type="active site" description="For protease activity" evidence="3">
    <location>
        <position position="272"/>
    </location>
</feature>
<feature type="active site" description="For protease activity" evidence="3">
    <location>
        <position position="304"/>
    </location>
</feature>
<feature type="active site" description="For protease activity" evidence="3">
    <location>
        <position position="373"/>
    </location>
</feature>
<feature type="site" description="Cleavage; by viral serine protease" evidence="1">
    <location>
        <begin position="221"/>
        <end position="222"/>
    </location>
</feature>
<feature type="site" description="Cleavage; by viral serine protease" evidence="1">
    <location>
        <begin position="416"/>
        <end position="417"/>
    </location>
</feature>
<name>RDRP_PNLV</name>
<reference key="1">
    <citation type="journal article" date="2005" name="Virology">
        <title>Poinsettia latent virus is not a cryptic virus, but a natural polerovirus-sobemovirus hybrid.</title>
        <authorList>
            <person name="Aus dem Siepen M."/>
            <person name="Pohl J.O."/>
            <person name="Koo B.J."/>
            <person name="Wege C."/>
            <person name="Jeske H."/>
        </authorList>
    </citation>
    <scope>NUCLEOTIDE SEQUENCE [GENOMIC RNA]</scope>
</reference>
<organismHost>
    <name type="scientific">Euphorbia pulcherrima</name>
    <name type="common">Poinsettia</name>
    <name type="synonym">Poinsettia pulcherrima</name>
    <dbReference type="NCBI Taxonomy" id="37495"/>
</organismHost>
<keyword id="KW-1043">Host membrane</keyword>
<keyword id="KW-0378">Hydrolase</keyword>
<keyword id="KW-0472">Membrane</keyword>
<keyword id="KW-0547">Nucleotide-binding</keyword>
<keyword id="KW-0548">Nucleotidyltransferase</keyword>
<keyword id="KW-0645">Protease</keyword>
<keyword id="KW-1185">Reference proteome</keyword>
<keyword id="KW-0688">Ribosomal frameshifting</keyword>
<keyword id="KW-0696">RNA-directed RNA polymerase</keyword>
<keyword id="KW-0720">Serine protease</keyword>
<keyword id="KW-0732">Signal</keyword>
<keyword id="KW-0808">Transferase</keyword>
<keyword id="KW-0812">Transmembrane</keyword>
<keyword id="KW-1133">Transmembrane helix</keyword>
<keyword id="KW-0693">Viral RNA replication</keyword>
<proteinExistence type="inferred from homology"/>
<gene>
    <name type="ORF">ORF2/ORF3</name>
</gene>
<accession>Q5NDM9</accession>
<protein>
    <recommendedName>
        <fullName>Protein P2-P3</fullName>
    </recommendedName>
    <component>
        <recommendedName>
            <fullName>Serine protease</fullName>
            <ecNumber>3.4.21.-</ecNumber>
        </recommendedName>
    </component>
    <component>
        <recommendedName>
            <fullName>RNA-directed RNA polymerase</fullName>
            <ecNumber>2.7.7.48</ecNumber>
        </recommendedName>
    </component>
</protein>
<comment type="function">
    <text evidence="5">Precursor from which the RNA-dependent RNA polymerase (RdRp) is probably released. RNA-dependent RNA polymerase plays an essential role in virus replication (Potential).</text>
</comment>
<comment type="function">
    <text evidence="5">RNA-dependent RNA polymerase replicates the viral genome.</text>
</comment>
<comment type="catalytic activity">
    <reaction evidence="2">
        <text>RNA(n) + a ribonucleoside 5'-triphosphate = RNA(n+1) + diphosphate</text>
        <dbReference type="Rhea" id="RHEA:21248"/>
        <dbReference type="Rhea" id="RHEA-COMP:14527"/>
        <dbReference type="Rhea" id="RHEA-COMP:17342"/>
        <dbReference type="ChEBI" id="CHEBI:33019"/>
        <dbReference type="ChEBI" id="CHEBI:61557"/>
        <dbReference type="ChEBI" id="CHEBI:140395"/>
        <dbReference type="EC" id="2.7.7.48"/>
    </reaction>
</comment>
<comment type="subcellular location">
    <subcellularLocation>
        <location evidence="5">Host membrane</location>
        <topology evidence="5">Multi-pass membrane protein</topology>
    </subcellularLocation>
</comment>
<comment type="alternative products">
    <event type="ribosomal frameshifting"/>
    <isoform>
        <id>Q5NDM9-1</id>
        <name>Protein P2-P3</name>
        <sequence type="displayed"/>
    </isoform>
    <isoform>
        <id>Q5NDN0-1</id>
        <name>Genome-linked protein precursor</name>
        <sequence type="external"/>
    </isoform>
</comment>
<comment type="miscellaneous">
    <molecule>Isoform Protein P2-P3</molecule>
    <text>Produced by -1 ribosomal frameshifting between codons 541 and 542.</text>
</comment>
<comment type="similarity">
    <text evidence="5">Belongs to the ssRNA positive-strand viruses RNA-directed RNA polymerase family.</text>
</comment>